<evidence type="ECO:0000255" key="1">
    <source>
        <dbReference type="HAMAP-Rule" id="MF_03048"/>
    </source>
</evidence>
<evidence type="ECO:0000305" key="2"/>
<feature type="chain" id="PRO_0000367867" description="Ubiquitin-related modifier 1 homolog 1">
    <location>
        <begin position="1"/>
        <end position="101"/>
    </location>
</feature>
<feature type="modified residue" description="1-thioglycine" evidence="1">
    <location>
        <position position="101"/>
    </location>
</feature>
<feature type="cross-link" description="Glycyl lysine isopeptide (Gly-Lys) (interchain with K-? in acceptor proteins)" evidence="1">
    <location>
        <position position="101"/>
    </location>
</feature>
<name>URM11_ARATH</name>
<proteinExistence type="inferred from homology"/>
<organism>
    <name type="scientific">Arabidopsis thaliana</name>
    <name type="common">Mouse-ear cress</name>
    <dbReference type="NCBI Taxonomy" id="3702"/>
    <lineage>
        <taxon>Eukaryota</taxon>
        <taxon>Viridiplantae</taxon>
        <taxon>Streptophyta</taxon>
        <taxon>Embryophyta</taxon>
        <taxon>Tracheophyta</taxon>
        <taxon>Spermatophyta</taxon>
        <taxon>Magnoliopsida</taxon>
        <taxon>eudicotyledons</taxon>
        <taxon>Gunneridae</taxon>
        <taxon>Pentapetalae</taxon>
        <taxon>rosids</taxon>
        <taxon>malvids</taxon>
        <taxon>Brassicales</taxon>
        <taxon>Brassicaceae</taxon>
        <taxon>Camelineae</taxon>
        <taxon>Arabidopsis</taxon>
    </lineage>
</organism>
<keyword id="KW-0963">Cytoplasm</keyword>
<keyword id="KW-1017">Isopeptide bond</keyword>
<keyword id="KW-1185">Reference proteome</keyword>
<keyword id="KW-0819">tRNA processing</keyword>
<keyword id="KW-0833">Ubl conjugation pathway</keyword>
<protein>
    <recommendedName>
        <fullName evidence="1">Ubiquitin-related modifier 1 homolog 1</fullName>
    </recommendedName>
</protein>
<gene>
    <name evidence="1" type="primary">URM1-1</name>
    <name type="ordered locus">At2g45695</name>
    <name type="ORF">17K2</name>
</gene>
<reference key="1">
    <citation type="journal article" date="1999" name="Nature">
        <title>Sequence and analysis of chromosome 2 of the plant Arabidopsis thaliana.</title>
        <authorList>
            <person name="Lin X."/>
            <person name="Kaul S."/>
            <person name="Rounsley S.D."/>
            <person name="Shea T.P."/>
            <person name="Benito M.-I."/>
            <person name="Town C.D."/>
            <person name="Fujii C.Y."/>
            <person name="Mason T.M."/>
            <person name="Bowman C.L."/>
            <person name="Barnstead M.E."/>
            <person name="Feldblyum T.V."/>
            <person name="Buell C.R."/>
            <person name="Ketchum K.A."/>
            <person name="Lee J.J."/>
            <person name="Ronning C.M."/>
            <person name="Koo H.L."/>
            <person name="Moffat K.S."/>
            <person name="Cronin L.A."/>
            <person name="Shen M."/>
            <person name="Pai G."/>
            <person name="Van Aken S."/>
            <person name="Umayam L."/>
            <person name="Tallon L.J."/>
            <person name="Gill J.E."/>
            <person name="Adams M.D."/>
            <person name="Carrera A.J."/>
            <person name="Creasy T.H."/>
            <person name="Goodman H.M."/>
            <person name="Somerville C.R."/>
            <person name="Copenhaver G.P."/>
            <person name="Preuss D."/>
            <person name="Nierman W.C."/>
            <person name="White O."/>
            <person name="Eisen J.A."/>
            <person name="Salzberg S.L."/>
            <person name="Fraser C.M."/>
            <person name="Venter J.C."/>
        </authorList>
    </citation>
    <scope>NUCLEOTIDE SEQUENCE [LARGE SCALE GENOMIC DNA]</scope>
    <source>
        <strain>cv. Columbia</strain>
    </source>
</reference>
<reference key="2">
    <citation type="journal article" date="2017" name="Plant J.">
        <title>Araport11: a complete reannotation of the Arabidopsis thaliana reference genome.</title>
        <authorList>
            <person name="Cheng C.Y."/>
            <person name="Krishnakumar V."/>
            <person name="Chan A.P."/>
            <person name="Thibaud-Nissen F."/>
            <person name="Schobel S."/>
            <person name="Town C.D."/>
        </authorList>
    </citation>
    <scope>GENOME REANNOTATION</scope>
    <source>
        <strain>cv. Columbia</strain>
    </source>
</reference>
<reference key="3">
    <citation type="journal article" date="2006" name="Plant Biotechnol. J.">
        <title>Simultaneous high-throughput recombinational cloning of open reading frames in closed and open configurations.</title>
        <authorList>
            <person name="Underwood B.A."/>
            <person name="Vanderhaeghen R."/>
            <person name="Whitford R."/>
            <person name="Town C.D."/>
            <person name="Hilson P."/>
        </authorList>
    </citation>
    <scope>NUCLEOTIDE SEQUENCE [LARGE SCALE MRNA]</scope>
    <source>
        <strain>cv. Columbia</strain>
    </source>
</reference>
<reference key="4">
    <citation type="submission" date="2005-03" db="EMBL/GenBank/DDBJ databases">
        <title>Large-scale analysis of RIKEN Arabidopsis full-length (RAFL) cDNAs.</title>
        <authorList>
            <person name="Totoki Y."/>
            <person name="Seki M."/>
            <person name="Ishida J."/>
            <person name="Nakajima M."/>
            <person name="Enju A."/>
            <person name="Kamiya A."/>
            <person name="Narusaka M."/>
            <person name="Shin-i T."/>
            <person name="Nakagawa M."/>
            <person name="Sakamoto N."/>
            <person name="Oishi K."/>
            <person name="Kohara Y."/>
            <person name="Kobayashi M."/>
            <person name="Toyoda A."/>
            <person name="Sakaki Y."/>
            <person name="Sakurai T."/>
            <person name="Iida K."/>
            <person name="Akiyama K."/>
            <person name="Satou M."/>
            <person name="Toyoda T."/>
            <person name="Konagaya A."/>
            <person name="Carninci P."/>
            <person name="Kawai J."/>
            <person name="Hayashizaki Y."/>
            <person name="Shinozaki K."/>
        </authorList>
    </citation>
    <scope>NUCLEOTIDE SEQUENCE [LARGE SCALE MRNA]</scope>
    <source>
        <strain>cv. Columbia</strain>
    </source>
</reference>
<accession>A0MDQ1</accession>
<accession>Q570Q1</accession>
<sequence>MQLTLEFGGGLELLCDSEKIHKVNVDLPNGADSDDFTMKHLLSWVRTNLIKERPEMFMKGDTVRPGVLVLVNDCDWELSGQLDTVIEDKDVVVFISTLHGG</sequence>
<dbReference type="EMBL" id="AC003680">
    <property type="status" value="NOT_ANNOTATED_CDS"/>
    <property type="molecule type" value="Genomic_DNA"/>
</dbReference>
<dbReference type="EMBL" id="CP002685">
    <property type="protein sequence ID" value="AEC10588.1"/>
    <property type="molecule type" value="Genomic_DNA"/>
</dbReference>
<dbReference type="EMBL" id="DQ487520">
    <property type="protein sequence ID" value="ABF59216.1"/>
    <property type="molecule type" value="mRNA"/>
</dbReference>
<dbReference type="EMBL" id="DQ652667">
    <property type="protein sequence ID" value="ABK28333.1"/>
    <property type="status" value="ALT_SEQ"/>
    <property type="molecule type" value="mRNA"/>
</dbReference>
<dbReference type="EMBL" id="AK220657">
    <property type="protein sequence ID" value="BAD95172.1"/>
    <property type="molecule type" value="mRNA"/>
</dbReference>
<dbReference type="RefSeq" id="NP_001078064.1">
    <property type="nucleotide sequence ID" value="NM_001084595.3"/>
</dbReference>
<dbReference type="SMR" id="A0MDQ1"/>
<dbReference type="FunCoup" id="A0MDQ1">
    <property type="interactions" value="3335"/>
</dbReference>
<dbReference type="STRING" id="3702.A0MDQ1"/>
<dbReference type="PaxDb" id="3702-AT2G45695.1"/>
<dbReference type="ProteomicsDB" id="228573"/>
<dbReference type="EnsemblPlants" id="AT2G45695.1">
    <property type="protein sequence ID" value="AT2G45695.1"/>
    <property type="gene ID" value="AT2G45695"/>
</dbReference>
<dbReference type="GeneID" id="5007965"/>
<dbReference type="Gramene" id="AT2G45695.1">
    <property type="protein sequence ID" value="AT2G45695.1"/>
    <property type="gene ID" value="AT2G45695"/>
</dbReference>
<dbReference type="KEGG" id="ath:AT2G45695"/>
<dbReference type="Araport" id="AT2G45695"/>
<dbReference type="TAIR" id="AT2G45695">
    <property type="gene designation" value="URM11"/>
</dbReference>
<dbReference type="eggNOG" id="KOG4146">
    <property type="taxonomic scope" value="Eukaryota"/>
</dbReference>
<dbReference type="HOGENOM" id="CLU_148208_0_1_1"/>
<dbReference type="InParanoid" id="A0MDQ1"/>
<dbReference type="OMA" id="IHFMAEK"/>
<dbReference type="OrthoDB" id="10248987at2759"/>
<dbReference type="PhylomeDB" id="A0MDQ1"/>
<dbReference type="UniPathway" id="UPA00988"/>
<dbReference type="PRO" id="PR:A0MDQ1"/>
<dbReference type="Proteomes" id="UP000006548">
    <property type="component" value="Chromosome 2"/>
</dbReference>
<dbReference type="ExpressionAtlas" id="A0MDQ1">
    <property type="expression patterns" value="baseline and differential"/>
</dbReference>
<dbReference type="GO" id="GO:0005829">
    <property type="term" value="C:cytosol"/>
    <property type="evidence" value="ECO:0007669"/>
    <property type="project" value="UniProtKB-UniRule"/>
</dbReference>
<dbReference type="GO" id="GO:0032447">
    <property type="term" value="P:protein urmylation"/>
    <property type="evidence" value="ECO:0007669"/>
    <property type="project" value="UniProtKB-UniRule"/>
</dbReference>
<dbReference type="GO" id="GO:0034227">
    <property type="term" value="P:tRNA thio-modification"/>
    <property type="evidence" value="ECO:0007669"/>
    <property type="project" value="UniProtKB-UniRule"/>
</dbReference>
<dbReference type="GO" id="GO:0002098">
    <property type="term" value="P:tRNA wobble uridine modification"/>
    <property type="evidence" value="ECO:0007669"/>
    <property type="project" value="UniProtKB-UniRule"/>
</dbReference>
<dbReference type="CDD" id="cd01764">
    <property type="entry name" value="Ubl_Urm1"/>
    <property type="match status" value="1"/>
</dbReference>
<dbReference type="Gene3D" id="3.10.20.30">
    <property type="match status" value="1"/>
</dbReference>
<dbReference type="HAMAP" id="MF_03048">
    <property type="entry name" value="Urm1"/>
    <property type="match status" value="1"/>
</dbReference>
<dbReference type="InterPro" id="IPR012675">
    <property type="entry name" value="Beta-grasp_dom_sf"/>
</dbReference>
<dbReference type="InterPro" id="IPR016155">
    <property type="entry name" value="Mopterin_synth/thiamin_S_b"/>
</dbReference>
<dbReference type="InterPro" id="IPR015221">
    <property type="entry name" value="Urm1"/>
</dbReference>
<dbReference type="PANTHER" id="PTHR14986">
    <property type="entry name" value="RURM1 PROTEIN"/>
    <property type="match status" value="1"/>
</dbReference>
<dbReference type="Pfam" id="PF09138">
    <property type="entry name" value="Urm1"/>
    <property type="match status" value="1"/>
</dbReference>
<dbReference type="PIRSF" id="PIRSF037379">
    <property type="entry name" value="Ubiquitin-related_modifier_1"/>
    <property type="match status" value="1"/>
</dbReference>
<dbReference type="SUPFAM" id="SSF54285">
    <property type="entry name" value="MoaD/ThiS"/>
    <property type="match status" value="1"/>
</dbReference>
<comment type="function">
    <text evidence="1">Acts as a sulfur carrier required for 2-thiolation of mcm(5)S(2)U at tRNA wobble positions of cytosolic tRNA(Lys), tRNA(Glu) and tRNA(Gln). Serves as sulfur donor in tRNA 2-thiolation reaction by being thiocarboxylated (-COSH) at its C-terminus by MOCS3. The sulfur is then transferred to tRNA to form 2-thiolation of mcm(5)S(2)U. Also acts as a ubiquitin-like protein (UBL) that is covalently conjugated via an isopeptide bond to lysine residues of target proteins. The thiocarboxylated form serves as substrate for conjugation and oxidative stress specifically induces the formation of UBL-protein conjugates.</text>
</comment>
<comment type="pathway">
    <text evidence="1">tRNA modification; 5-methoxycarbonylmethyl-2-thiouridine-tRNA biosynthesis.</text>
</comment>
<comment type="subcellular location">
    <subcellularLocation>
        <location evidence="1">Cytoplasm</location>
    </subcellularLocation>
</comment>
<comment type="PTM">
    <text evidence="1">C-terminal thiocarboxylation occurs in 2 steps, it is first acyl-adenylated (-COAMP) via the hesA/moeB/thiF part of the MOCS3 homolog, then thiocarboxylated (-COSH) via the rhodanese domain of the MOCS3 homolog.</text>
</comment>
<comment type="similarity">
    <text evidence="1">Belongs to the URM1 family.</text>
</comment>
<comment type="sequence caution" evidence="2">
    <conflict type="erroneous termination">
        <sequence resource="EMBL-CDS" id="ABK28333"/>
    </conflict>
    <text>Extended C-terminus.</text>
</comment>